<protein>
    <recommendedName>
        <fullName evidence="1">Small ribosomal subunit protein uS15</fullName>
    </recommendedName>
    <alternativeName>
        <fullName evidence="2">30S ribosomal protein S15</fullName>
    </alternativeName>
</protein>
<organism>
    <name type="scientific">Caldanaerobacter subterraneus subsp. tengcongensis (strain DSM 15242 / JCM 11007 / NBRC 100824 / MB4)</name>
    <name type="common">Thermoanaerobacter tengcongensis</name>
    <dbReference type="NCBI Taxonomy" id="273068"/>
    <lineage>
        <taxon>Bacteria</taxon>
        <taxon>Bacillati</taxon>
        <taxon>Bacillota</taxon>
        <taxon>Clostridia</taxon>
        <taxon>Thermoanaerobacterales</taxon>
        <taxon>Thermoanaerobacteraceae</taxon>
        <taxon>Caldanaerobacter</taxon>
    </lineage>
</organism>
<sequence>MLDKEKKAEIINKFKLHETDTGSPEVQIALLTERINRLTEHLQVHKKDHHSRRGLLKMVGQRRALLNYLMKKDINRYRAIIEKLDLRK</sequence>
<keyword id="KW-1185">Reference proteome</keyword>
<keyword id="KW-0687">Ribonucleoprotein</keyword>
<keyword id="KW-0689">Ribosomal protein</keyword>
<keyword id="KW-0694">RNA-binding</keyword>
<keyword id="KW-0699">rRNA-binding</keyword>
<reference key="1">
    <citation type="journal article" date="2002" name="Genome Res.">
        <title>A complete sequence of the T. tengcongensis genome.</title>
        <authorList>
            <person name="Bao Q."/>
            <person name="Tian Y."/>
            <person name="Li W."/>
            <person name="Xu Z."/>
            <person name="Xuan Z."/>
            <person name="Hu S."/>
            <person name="Dong W."/>
            <person name="Yang J."/>
            <person name="Chen Y."/>
            <person name="Xue Y."/>
            <person name="Xu Y."/>
            <person name="Lai X."/>
            <person name="Huang L."/>
            <person name="Dong X."/>
            <person name="Ma Y."/>
            <person name="Ling L."/>
            <person name="Tan H."/>
            <person name="Chen R."/>
            <person name="Wang J."/>
            <person name="Yu J."/>
            <person name="Yang H."/>
        </authorList>
    </citation>
    <scope>NUCLEOTIDE SEQUENCE [LARGE SCALE GENOMIC DNA]</scope>
    <source>
        <strain>DSM 15242 / JCM 11007 / NBRC 100824 / MB4</strain>
    </source>
</reference>
<evidence type="ECO:0000255" key="1">
    <source>
        <dbReference type="HAMAP-Rule" id="MF_01343"/>
    </source>
</evidence>
<evidence type="ECO:0000305" key="2"/>
<comment type="function">
    <text evidence="1">One of the primary rRNA binding proteins, it binds directly to 16S rRNA where it helps nucleate assembly of the platform of the 30S subunit by binding and bridging several RNA helices of the 16S rRNA.</text>
</comment>
<comment type="function">
    <text evidence="1">Forms an intersubunit bridge (bridge B4) with the 23S rRNA of the 50S subunit in the ribosome.</text>
</comment>
<comment type="subunit">
    <text evidence="1">Part of the 30S ribosomal subunit. Forms a bridge to the 50S subunit in the 70S ribosome, contacting the 23S rRNA.</text>
</comment>
<comment type="similarity">
    <text evidence="1">Belongs to the universal ribosomal protein uS15 family.</text>
</comment>
<accession>Q8RA42</accession>
<feature type="chain" id="PRO_0000115569" description="Small ribosomal subunit protein uS15">
    <location>
        <begin position="1"/>
        <end position="88"/>
    </location>
</feature>
<dbReference type="EMBL" id="AE008691">
    <property type="protein sequence ID" value="AAM24610.1"/>
    <property type="molecule type" value="Genomic_DNA"/>
</dbReference>
<dbReference type="SMR" id="Q8RA42"/>
<dbReference type="STRING" id="273068.TTE1388"/>
<dbReference type="KEGG" id="tte:TTE1388"/>
<dbReference type="eggNOG" id="COG0184">
    <property type="taxonomic scope" value="Bacteria"/>
</dbReference>
<dbReference type="HOGENOM" id="CLU_148518_0_0_9"/>
<dbReference type="OrthoDB" id="9799262at2"/>
<dbReference type="Proteomes" id="UP000000555">
    <property type="component" value="Chromosome"/>
</dbReference>
<dbReference type="GO" id="GO:0022627">
    <property type="term" value="C:cytosolic small ribosomal subunit"/>
    <property type="evidence" value="ECO:0007669"/>
    <property type="project" value="TreeGrafter"/>
</dbReference>
<dbReference type="GO" id="GO:0019843">
    <property type="term" value="F:rRNA binding"/>
    <property type="evidence" value="ECO:0007669"/>
    <property type="project" value="UniProtKB-UniRule"/>
</dbReference>
<dbReference type="GO" id="GO:0003735">
    <property type="term" value="F:structural constituent of ribosome"/>
    <property type="evidence" value="ECO:0007669"/>
    <property type="project" value="InterPro"/>
</dbReference>
<dbReference type="GO" id="GO:0006412">
    <property type="term" value="P:translation"/>
    <property type="evidence" value="ECO:0007669"/>
    <property type="project" value="UniProtKB-UniRule"/>
</dbReference>
<dbReference type="CDD" id="cd00353">
    <property type="entry name" value="Ribosomal_S15p_S13e"/>
    <property type="match status" value="1"/>
</dbReference>
<dbReference type="FunFam" id="1.10.287.10:FF:000002">
    <property type="entry name" value="30S ribosomal protein S15"/>
    <property type="match status" value="1"/>
</dbReference>
<dbReference type="Gene3D" id="6.10.250.3130">
    <property type="match status" value="1"/>
</dbReference>
<dbReference type="Gene3D" id="1.10.287.10">
    <property type="entry name" value="S15/NS1, RNA-binding"/>
    <property type="match status" value="1"/>
</dbReference>
<dbReference type="HAMAP" id="MF_01343_B">
    <property type="entry name" value="Ribosomal_uS15_B"/>
    <property type="match status" value="1"/>
</dbReference>
<dbReference type="InterPro" id="IPR000589">
    <property type="entry name" value="Ribosomal_uS15"/>
</dbReference>
<dbReference type="InterPro" id="IPR005290">
    <property type="entry name" value="Ribosomal_uS15_bac-type"/>
</dbReference>
<dbReference type="InterPro" id="IPR009068">
    <property type="entry name" value="uS15_NS1_RNA-bd_sf"/>
</dbReference>
<dbReference type="NCBIfam" id="TIGR00952">
    <property type="entry name" value="S15_bact"/>
    <property type="match status" value="1"/>
</dbReference>
<dbReference type="PANTHER" id="PTHR23321">
    <property type="entry name" value="RIBOSOMAL PROTEIN S15, BACTERIAL AND ORGANELLAR"/>
    <property type="match status" value="1"/>
</dbReference>
<dbReference type="PANTHER" id="PTHR23321:SF26">
    <property type="entry name" value="SMALL RIBOSOMAL SUBUNIT PROTEIN US15M"/>
    <property type="match status" value="1"/>
</dbReference>
<dbReference type="Pfam" id="PF00312">
    <property type="entry name" value="Ribosomal_S15"/>
    <property type="match status" value="1"/>
</dbReference>
<dbReference type="SMART" id="SM01387">
    <property type="entry name" value="Ribosomal_S15"/>
    <property type="match status" value="1"/>
</dbReference>
<dbReference type="SUPFAM" id="SSF47060">
    <property type="entry name" value="S15/NS1 RNA-binding domain"/>
    <property type="match status" value="1"/>
</dbReference>
<dbReference type="PROSITE" id="PS00362">
    <property type="entry name" value="RIBOSOMAL_S15"/>
    <property type="match status" value="1"/>
</dbReference>
<proteinExistence type="inferred from homology"/>
<gene>
    <name evidence="1" type="primary">rpsO</name>
    <name type="ordered locus">TTE1388</name>
</gene>
<name>RS15_CALS4</name>